<evidence type="ECO:0000255" key="1">
    <source>
        <dbReference type="HAMAP-Rule" id="MF_01291"/>
    </source>
</evidence>
<organism>
    <name type="scientific">Enterobacter sp. (strain 638)</name>
    <dbReference type="NCBI Taxonomy" id="399742"/>
    <lineage>
        <taxon>Bacteria</taxon>
        <taxon>Pseudomonadati</taxon>
        <taxon>Pseudomonadota</taxon>
        <taxon>Gammaproteobacteria</taxon>
        <taxon>Enterobacterales</taxon>
        <taxon>Enterobacteriaceae</taxon>
        <taxon>Enterobacter</taxon>
    </lineage>
</organism>
<dbReference type="EC" id="4.1.2.20" evidence="1"/>
<dbReference type="EMBL" id="CP000653">
    <property type="protein sequence ID" value="ABP62226.1"/>
    <property type="molecule type" value="Genomic_DNA"/>
</dbReference>
<dbReference type="RefSeq" id="WP_015960552.1">
    <property type="nucleotide sequence ID" value="NC_009436.1"/>
</dbReference>
<dbReference type="SMR" id="A4WEU6"/>
<dbReference type="STRING" id="399742.Ent638_3568"/>
<dbReference type="KEGG" id="ent:Ent638_3568"/>
<dbReference type="eggNOG" id="COG3836">
    <property type="taxonomic scope" value="Bacteria"/>
</dbReference>
<dbReference type="HOGENOM" id="CLU_059964_1_0_6"/>
<dbReference type="OrthoDB" id="86160at2"/>
<dbReference type="UniPathway" id="UPA00565">
    <property type="reaction ID" value="UER00630"/>
</dbReference>
<dbReference type="Proteomes" id="UP000000230">
    <property type="component" value="Chromosome"/>
</dbReference>
<dbReference type="GO" id="GO:0005737">
    <property type="term" value="C:cytoplasm"/>
    <property type="evidence" value="ECO:0007669"/>
    <property type="project" value="TreeGrafter"/>
</dbReference>
<dbReference type="GO" id="GO:0008672">
    <property type="term" value="F:2-dehydro-3-deoxyglucarate aldolase activity"/>
    <property type="evidence" value="ECO:0007669"/>
    <property type="project" value="UniProtKB-UniRule"/>
</dbReference>
<dbReference type="GO" id="GO:0000287">
    <property type="term" value="F:magnesium ion binding"/>
    <property type="evidence" value="ECO:0007669"/>
    <property type="project" value="UniProtKB-UniRule"/>
</dbReference>
<dbReference type="GO" id="GO:0042838">
    <property type="term" value="P:D-glucarate catabolic process"/>
    <property type="evidence" value="ECO:0007669"/>
    <property type="project" value="UniProtKB-UniRule"/>
</dbReference>
<dbReference type="GO" id="GO:0046392">
    <property type="term" value="P:galactarate catabolic process"/>
    <property type="evidence" value="ECO:0007669"/>
    <property type="project" value="UniProtKB-UniRule"/>
</dbReference>
<dbReference type="FunFam" id="3.20.20.60:FF:000004">
    <property type="entry name" value="5-keto-4-deoxy-D-glucarate aldolase"/>
    <property type="match status" value="1"/>
</dbReference>
<dbReference type="Gene3D" id="3.20.20.60">
    <property type="entry name" value="Phosphoenolpyruvate-binding domains"/>
    <property type="match status" value="1"/>
</dbReference>
<dbReference type="HAMAP" id="MF_01291">
    <property type="entry name" value="KDGluc_aldolase"/>
    <property type="match status" value="1"/>
</dbReference>
<dbReference type="InterPro" id="IPR005000">
    <property type="entry name" value="Aldolase/citrate-lyase_domain"/>
</dbReference>
<dbReference type="InterPro" id="IPR017648">
    <property type="entry name" value="GarL"/>
</dbReference>
<dbReference type="InterPro" id="IPR050251">
    <property type="entry name" value="HpcH-HpaI_aldolase"/>
</dbReference>
<dbReference type="InterPro" id="IPR015813">
    <property type="entry name" value="Pyrv/PenolPyrv_kinase-like_dom"/>
</dbReference>
<dbReference type="InterPro" id="IPR040442">
    <property type="entry name" value="Pyrv_kinase-like_dom_sf"/>
</dbReference>
<dbReference type="NCBIfam" id="TIGR03239">
    <property type="entry name" value="GarL"/>
    <property type="match status" value="1"/>
</dbReference>
<dbReference type="NCBIfam" id="NF007849">
    <property type="entry name" value="PRK10558.1"/>
    <property type="match status" value="1"/>
</dbReference>
<dbReference type="PANTHER" id="PTHR30502">
    <property type="entry name" value="2-KETO-3-DEOXY-L-RHAMNONATE ALDOLASE"/>
    <property type="match status" value="1"/>
</dbReference>
<dbReference type="PANTHER" id="PTHR30502:SF4">
    <property type="entry name" value="5-KETO-4-DEOXY-D-GLUCARATE ALDOLASE"/>
    <property type="match status" value="1"/>
</dbReference>
<dbReference type="Pfam" id="PF03328">
    <property type="entry name" value="HpcH_HpaI"/>
    <property type="match status" value="1"/>
</dbReference>
<dbReference type="SUPFAM" id="SSF51621">
    <property type="entry name" value="Phosphoenolpyruvate/pyruvate domain"/>
    <property type="match status" value="1"/>
</dbReference>
<gene>
    <name evidence="1" type="primary">garL</name>
    <name type="ordered locus">Ent638_3568</name>
</gene>
<proteinExistence type="inferred from homology"/>
<comment type="function">
    <text evidence="1">Catalyzes the reversible retro-aldol cleavage of both 5-keto-4-deoxy-D-glucarate and 2-keto-3-deoxy-D-glucarate to pyruvate and tartronic semialdehyde.</text>
</comment>
<comment type="catalytic activity">
    <reaction evidence="1">
        <text>5-dehydro-4-deoxy-D-glucarate = 2-hydroxy-3-oxopropanoate + pyruvate</text>
        <dbReference type="Rhea" id="RHEA:27726"/>
        <dbReference type="ChEBI" id="CHEBI:15361"/>
        <dbReference type="ChEBI" id="CHEBI:42819"/>
        <dbReference type="ChEBI" id="CHEBI:57978"/>
    </reaction>
</comment>
<comment type="catalytic activity">
    <reaction evidence="1">
        <text>2-dehydro-3-deoxy-D-glucarate = 2-hydroxy-3-oxopropanoate + pyruvate</text>
        <dbReference type="Rhea" id="RHEA:10268"/>
        <dbReference type="ChEBI" id="CHEBI:15361"/>
        <dbReference type="ChEBI" id="CHEBI:57978"/>
        <dbReference type="ChEBI" id="CHEBI:58098"/>
        <dbReference type="EC" id="4.1.2.20"/>
    </reaction>
</comment>
<comment type="cofactor">
    <cofactor evidence="1">
        <name>Mg(2+)</name>
        <dbReference type="ChEBI" id="CHEBI:18420"/>
    </cofactor>
    <text evidence="1">Binds 1 Mg(2+) ion per subunit.</text>
</comment>
<comment type="pathway">
    <text evidence="1">Carbohydrate acid metabolism; galactarate degradation; D-glycerate from galactarate: step 2/3.</text>
</comment>
<comment type="subunit">
    <text evidence="1">Homohexamer; trimer of dimers.</text>
</comment>
<comment type="similarity">
    <text evidence="1">Belongs to the HpcH/HpaI aldolase family. KDGluc aldolase subfamily.</text>
</comment>
<keyword id="KW-0456">Lyase</keyword>
<keyword id="KW-0460">Magnesium</keyword>
<keyword id="KW-0479">Metal-binding</keyword>
<sequence length="256" mass="27593">MSNDIFPNKFKAALAAKEIQIGCWSALASPISTEVLGLAGFDWLVLDGEHAPNDITTFIPQLMALKGSRSAPVVRVPTNEPVIIKRLLDIGFYNFLIPFVENVEEAVQAVASTRYPPEGIRGVSVSHRANMFGTVPDYFSQSNKNITILVQIESQHGVDNVDAIAATDGVDGIFVGPSDLAAAFGHLGNANHPEVQRAIQHIFERAKAHGKPSGILAPVEADARRYLEWGATFVAVGSDLGVFRSATQKLADSFKK</sequence>
<accession>A4WEU6</accession>
<protein>
    <recommendedName>
        <fullName evidence="1">5-keto-4-deoxy-D-glucarate aldolase</fullName>
        <shortName evidence="1">KDGluc aldolase</shortName>
        <shortName evidence="1">KDGlucA</shortName>
        <ecNumber evidence="1">4.1.2.20</ecNumber>
    </recommendedName>
    <alternativeName>
        <fullName evidence="1">2-dehydro-3-deoxy-D-glucarate aldolase</fullName>
    </alternativeName>
    <alternativeName>
        <fullName evidence="1">2-keto-3-deoxy-D-glucarate aldolase</fullName>
    </alternativeName>
    <alternativeName>
        <fullName evidence="1">5-dehydro-4-deoxy-D-glucarate aldolase</fullName>
    </alternativeName>
    <alternativeName>
        <fullName evidence="1">Alpha-keto-beta-deoxy-D-glucarate aldolase</fullName>
    </alternativeName>
</protein>
<name>GARL_ENT38</name>
<feature type="chain" id="PRO_0000353141" description="5-keto-4-deoxy-D-glucarate aldolase">
    <location>
        <begin position="1"/>
        <end position="256"/>
    </location>
</feature>
<feature type="active site" description="Proton acceptor" evidence="1">
    <location>
        <position position="50"/>
    </location>
</feature>
<feature type="binding site" evidence="1">
    <location>
        <position position="151"/>
    </location>
    <ligand>
        <name>substrate</name>
    </ligand>
</feature>
<feature type="binding site" evidence="1">
    <location>
        <position position="153"/>
    </location>
    <ligand>
        <name>Mg(2+)</name>
        <dbReference type="ChEBI" id="CHEBI:18420"/>
    </ligand>
</feature>
<feature type="binding site" evidence="1">
    <location>
        <position position="178"/>
    </location>
    <ligand>
        <name>substrate</name>
    </ligand>
</feature>
<feature type="binding site" evidence="1">
    <location>
        <position position="179"/>
    </location>
    <ligand>
        <name>Mg(2+)</name>
        <dbReference type="ChEBI" id="CHEBI:18420"/>
    </ligand>
</feature>
<feature type="binding site" evidence="1">
    <location>
        <position position="179"/>
    </location>
    <ligand>
        <name>substrate</name>
    </ligand>
</feature>
<feature type="site" description="Transition state stabilizer" evidence="1">
    <location>
        <position position="75"/>
    </location>
</feature>
<feature type="site" description="Increases basicity of active site His" evidence="1">
    <location>
        <position position="89"/>
    </location>
</feature>
<reference key="1">
    <citation type="journal article" date="2010" name="PLoS Genet.">
        <title>Genome sequence of the plant growth promoting endophytic bacterium Enterobacter sp. 638.</title>
        <authorList>
            <person name="Taghavi S."/>
            <person name="van der Lelie D."/>
            <person name="Hoffman A."/>
            <person name="Zhang Y.B."/>
            <person name="Walla M.D."/>
            <person name="Vangronsveld J."/>
            <person name="Newman L."/>
            <person name="Monchy S."/>
        </authorList>
    </citation>
    <scope>NUCLEOTIDE SEQUENCE [LARGE SCALE GENOMIC DNA]</scope>
    <source>
        <strain>638</strain>
    </source>
</reference>